<keyword id="KW-0687">Ribonucleoprotein</keyword>
<keyword id="KW-0689">Ribosomal protein</keyword>
<keyword id="KW-0694">RNA-binding</keyword>
<keyword id="KW-0699">rRNA-binding</keyword>
<name>RS3_LEGPL</name>
<protein>
    <recommendedName>
        <fullName evidence="1">Small ribosomal subunit protein uS3</fullName>
    </recommendedName>
    <alternativeName>
        <fullName evidence="2">30S ribosomal protein S3</fullName>
    </alternativeName>
</protein>
<dbReference type="EMBL" id="CR628337">
    <property type="protein sequence ID" value="CAH14606.1"/>
    <property type="molecule type" value="Genomic_DNA"/>
</dbReference>
<dbReference type="RefSeq" id="WP_011214627.1">
    <property type="nucleotide sequence ID" value="NC_006369.1"/>
</dbReference>
<dbReference type="SMR" id="Q5WZK6"/>
<dbReference type="KEGG" id="lpf:lpl0375"/>
<dbReference type="LegioList" id="lpl0375"/>
<dbReference type="HOGENOM" id="CLU_058591_0_2_6"/>
<dbReference type="Proteomes" id="UP000002517">
    <property type="component" value="Chromosome"/>
</dbReference>
<dbReference type="GO" id="GO:0022627">
    <property type="term" value="C:cytosolic small ribosomal subunit"/>
    <property type="evidence" value="ECO:0007669"/>
    <property type="project" value="TreeGrafter"/>
</dbReference>
<dbReference type="GO" id="GO:0003729">
    <property type="term" value="F:mRNA binding"/>
    <property type="evidence" value="ECO:0007669"/>
    <property type="project" value="UniProtKB-UniRule"/>
</dbReference>
<dbReference type="GO" id="GO:0019843">
    <property type="term" value="F:rRNA binding"/>
    <property type="evidence" value="ECO:0007669"/>
    <property type="project" value="UniProtKB-UniRule"/>
</dbReference>
<dbReference type="GO" id="GO:0003735">
    <property type="term" value="F:structural constituent of ribosome"/>
    <property type="evidence" value="ECO:0007669"/>
    <property type="project" value="InterPro"/>
</dbReference>
<dbReference type="GO" id="GO:0006412">
    <property type="term" value="P:translation"/>
    <property type="evidence" value="ECO:0007669"/>
    <property type="project" value="UniProtKB-UniRule"/>
</dbReference>
<dbReference type="CDD" id="cd02412">
    <property type="entry name" value="KH-II_30S_S3"/>
    <property type="match status" value="1"/>
</dbReference>
<dbReference type="FunFam" id="3.30.1140.32:FF:000001">
    <property type="entry name" value="30S ribosomal protein S3"/>
    <property type="match status" value="1"/>
</dbReference>
<dbReference type="FunFam" id="3.30.300.20:FF:000001">
    <property type="entry name" value="30S ribosomal protein S3"/>
    <property type="match status" value="1"/>
</dbReference>
<dbReference type="Gene3D" id="3.30.300.20">
    <property type="match status" value="1"/>
</dbReference>
<dbReference type="Gene3D" id="3.30.1140.32">
    <property type="entry name" value="Ribosomal protein S3, C-terminal domain"/>
    <property type="match status" value="1"/>
</dbReference>
<dbReference type="HAMAP" id="MF_01309_B">
    <property type="entry name" value="Ribosomal_uS3_B"/>
    <property type="match status" value="1"/>
</dbReference>
<dbReference type="InterPro" id="IPR004087">
    <property type="entry name" value="KH_dom"/>
</dbReference>
<dbReference type="InterPro" id="IPR015946">
    <property type="entry name" value="KH_dom-like_a/b"/>
</dbReference>
<dbReference type="InterPro" id="IPR004044">
    <property type="entry name" value="KH_dom_type_2"/>
</dbReference>
<dbReference type="InterPro" id="IPR009019">
    <property type="entry name" value="KH_sf_prok-type"/>
</dbReference>
<dbReference type="InterPro" id="IPR036419">
    <property type="entry name" value="Ribosomal_S3_C_sf"/>
</dbReference>
<dbReference type="InterPro" id="IPR005704">
    <property type="entry name" value="Ribosomal_uS3_bac-typ"/>
</dbReference>
<dbReference type="InterPro" id="IPR001351">
    <property type="entry name" value="Ribosomal_uS3_C"/>
</dbReference>
<dbReference type="InterPro" id="IPR018280">
    <property type="entry name" value="Ribosomal_uS3_CS"/>
</dbReference>
<dbReference type="NCBIfam" id="TIGR01009">
    <property type="entry name" value="rpsC_bact"/>
    <property type="match status" value="1"/>
</dbReference>
<dbReference type="PANTHER" id="PTHR11760">
    <property type="entry name" value="30S/40S RIBOSOMAL PROTEIN S3"/>
    <property type="match status" value="1"/>
</dbReference>
<dbReference type="PANTHER" id="PTHR11760:SF19">
    <property type="entry name" value="SMALL RIBOSOMAL SUBUNIT PROTEIN US3C"/>
    <property type="match status" value="1"/>
</dbReference>
<dbReference type="Pfam" id="PF07650">
    <property type="entry name" value="KH_2"/>
    <property type="match status" value="1"/>
</dbReference>
<dbReference type="Pfam" id="PF00189">
    <property type="entry name" value="Ribosomal_S3_C"/>
    <property type="match status" value="1"/>
</dbReference>
<dbReference type="SMART" id="SM00322">
    <property type="entry name" value="KH"/>
    <property type="match status" value="1"/>
</dbReference>
<dbReference type="SUPFAM" id="SSF54814">
    <property type="entry name" value="Prokaryotic type KH domain (KH-domain type II)"/>
    <property type="match status" value="1"/>
</dbReference>
<dbReference type="SUPFAM" id="SSF54821">
    <property type="entry name" value="Ribosomal protein S3 C-terminal domain"/>
    <property type="match status" value="1"/>
</dbReference>
<dbReference type="PROSITE" id="PS50823">
    <property type="entry name" value="KH_TYPE_2"/>
    <property type="match status" value="1"/>
</dbReference>
<dbReference type="PROSITE" id="PS00548">
    <property type="entry name" value="RIBOSOMAL_S3"/>
    <property type="match status" value="1"/>
</dbReference>
<sequence length="218" mass="24063">MGQKVNPIGIRLGIIKDWNSKWFAGKRYAEFLIQDIKLRSDLKKKLMAAAVSKILIERPANNAVVTILTARPGVIIGKKGGGIETLRKEISDSLGVPVHLNIEEVKKPELDATLVAEGIAQQLEQRVMFRRAMKRAVTSALKAGAKGIKICVSGRLGGAEIARSEWYREGRVPLHTFRADIDYGTAESKTTYGIIGVKVWIFKGEILPQKKRSTESAQ</sequence>
<organism>
    <name type="scientific">Legionella pneumophila (strain Lens)</name>
    <dbReference type="NCBI Taxonomy" id="297245"/>
    <lineage>
        <taxon>Bacteria</taxon>
        <taxon>Pseudomonadati</taxon>
        <taxon>Pseudomonadota</taxon>
        <taxon>Gammaproteobacteria</taxon>
        <taxon>Legionellales</taxon>
        <taxon>Legionellaceae</taxon>
        <taxon>Legionella</taxon>
    </lineage>
</organism>
<gene>
    <name evidence="1" type="primary">rpsC</name>
    <name type="ordered locus">lpl0375</name>
</gene>
<reference key="1">
    <citation type="journal article" date="2004" name="Nat. Genet.">
        <title>Evidence in the Legionella pneumophila genome for exploitation of host cell functions and high genome plasticity.</title>
        <authorList>
            <person name="Cazalet C."/>
            <person name="Rusniok C."/>
            <person name="Brueggemann H."/>
            <person name="Zidane N."/>
            <person name="Magnier A."/>
            <person name="Ma L."/>
            <person name="Tichit M."/>
            <person name="Jarraud S."/>
            <person name="Bouchier C."/>
            <person name="Vandenesch F."/>
            <person name="Kunst F."/>
            <person name="Etienne J."/>
            <person name="Glaser P."/>
            <person name="Buchrieser C."/>
        </authorList>
    </citation>
    <scope>NUCLEOTIDE SEQUENCE [LARGE SCALE GENOMIC DNA]</scope>
    <source>
        <strain>Lens</strain>
    </source>
</reference>
<feature type="chain" id="PRO_0000130138" description="Small ribosomal subunit protein uS3">
    <location>
        <begin position="1"/>
        <end position="218"/>
    </location>
</feature>
<feature type="domain" description="KH type-2" evidence="1">
    <location>
        <begin position="38"/>
        <end position="106"/>
    </location>
</feature>
<proteinExistence type="inferred from homology"/>
<comment type="function">
    <text evidence="1">Binds the lower part of the 30S subunit head. Binds mRNA in the 70S ribosome, positioning it for translation.</text>
</comment>
<comment type="subunit">
    <text evidence="1">Part of the 30S ribosomal subunit. Forms a tight complex with proteins S10 and S14.</text>
</comment>
<comment type="similarity">
    <text evidence="1">Belongs to the universal ribosomal protein uS3 family.</text>
</comment>
<accession>Q5WZK6</accession>
<evidence type="ECO:0000255" key="1">
    <source>
        <dbReference type="HAMAP-Rule" id="MF_01309"/>
    </source>
</evidence>
<evidence type="ECO:0000305" key="2"/>